<gene>
    <name evidence="1" type="primary">psd</name>
    <name type="ordered locus">PSEEN4961</name>
</gene>
<protein>
    <recommendedName>
        <fullName evidence="1">Phosphatidylserine decarboxylase proenzyme</fullName>
        <ecNumber evidence="1">4.1.1.65</ecNumber>
    </recommendedName>
    <component>
        <recommendedName>
            <fullName evidence="1">Phosphatidylserine decarboxylase alpha chain</fullName>
        </recommendedName>
    </component>
    <component>
        <recommendedName>
            <fullName evidence="1">Phosphatidylserine decarboxylase beta chain</fullName>
        </recommendedName>
    </component>
</protein>
<dbReference type="EC" id="4.1.1.65" evidence="1"/>
<dbReference type="EMBL" id="CT573326">
    <property type="protein sequence ID" value="CAK17603.1"/>
    <property type="molecule type" value="Genomic_DNA"/>
</dbReference>
<dbReference type="RefSeq" id="WP_011535963.1">
    <property type="nucleotide sequence ID" value="NC_008027.1"/>
</dbReference>
<dbReference type="SMR" id="Q1I433"/>
<dbReference type="STRING" id="384676.PSEEN4961"/>
<dbReference type="GeneID" id="32807907"/>
<dbReference type="KEGG" id="pen:PSEEN4961"/>
<dbReference type="eggNOG" id="COG0688">
    <property type="taxonomic scope" value="Bacteria"/>
</dbReference>
<dbReference type="HOGENOM" id="CLU_029061_4_1_6"/>
<dbReference type="OrthoDB" id="9802030at2"/>
<dbReference type="UniPathway" id="UPA00558">
    <property type="reaction ID" value="UER00616"/>
</dbReference>
<dbReference type="Proteomes" id="UP000000658">
    <property type="component" value="Chromosome"/>
</dbReference>
<dbReference type="GO" id="GO:0005886">
    <property type="term" value="C:plasma membrane"/>
    <property type="evidence" value="ECO:0007669"/>
    <property type="project" value="UniProtKB-SubCell"/>
</dbReference>
<dbReference type="GO" id="GO:0004609">
    <property type="term" value="F:phosphatidylserine decarboxylase activity"/>
    <property type="evidence" value="ECO:0007669"/>
    <property type="project" value="UniProtKB-UniRule"/>
</dbReference>
<dbReference type="GO" id="GO:0006646">
    <property type="term" value="P:phosphatidylethanolamine biosynthetic process"/>
    <property type="evidence" value="ECO:0007669"/>
    <property type="project" value="UniProtKB-UniRule"/>
</dbReference>
<dbReference type="HAMAP" id="MF_00662">
    <property type="entry name" value="PS_decarb_PSD_B_type1"/>
    <property type="match status" value="1"/>
</dbReference>
<dbReference type="InterPro" id="IPR003817">
    <property type="entry name" value="PS_Dcarbxylase"/>
</dbReference>
<dbReference type="InterPro" id="IPR033177">
    <property type="entry name" value="PSD-B"/>
</dbReference>
<dbReference type="InterPro" id="IPR033178">
    <property type="entry name" value="PSD_type1_pro"/>
</dbReference>
<dbReference type="NCBIfam" id="TIGR00163">
    <property type="entry name" value="PS_decarb"/>
    <property type="match status" value="1"/>
</dbReference>
<dbReference type="PANTHER" id="PTHR10067">
    <property type="entry name" value="PHOSPHATIDYLSERINE DECARBOXYLASE"/>
    <property type="match status" value="1"/>
</dbReference>
<dbReference type="PANTHER" id="PTHR10067:SF6">
    <property type="entry name" value="PHOSPHATIDYLSERINE DECARBOXYLASE PROENZYME, MITOCHONDRIAL"/>
    <property type="match status" value="1"/>
</dbReference>
<dbReference type="Pfam" id="PF02666">
    <property type="entry name" value="PS_Dcarbxylase"/>
    <property type="match status" value="1"/>
</dbReference>
<comment type="function">
    <text evidence="1">Catalyzes the formation of phosphatidylethanolamine (PtdEtn) from phosphatidylserine (PtdSer).</text>
</comment>
<comment type="catalytic activity">
    <reaction evidence="1">
        <text>a 1,2-diacyl-sn-glycero-3-phospho-L-serine + H(+) = a 1,2-diacyl-sn-glycero-3-phosphoethanolamine + CO2</text>
        <dbReference type="Rhea" id="RHEA:20828"/>
        <dbReference type="ChEBI" id="CHEBI:15378"/>
        <dbReference type="ChEBI" id="CHEBI:16526"/>
        <dbReference type="ChEBI" id="CHEBI:57262"/>
        <dbReference type="ChEBI" id="CHEBI:64612"/>
        <dbReference type="EC" id="4.1.1.65"/>
    </reaction>
</comment>
<comment type="cofactor">
    <cofactor evidence="1">
        <name>pyruvate</name>
        <dbReference type="ChEBI" id="CHEBI:15361"/>
    </cofactor>
    <text evidence="1">Binds 1 pyruvoyl group covalently per subunit.</text>
</comment>
<comment type="pathway">
    <text evidence="1">Phospholipid metabolism; phosphatidylethanolamine biosynthesis; phosphatidylethanolamine from CDP-diacylglycerol: step 2/2.</text>
</comment>
<comment type="subunit">
    <text evidence="1">Heterodimer of a large membrane-associated beta subunit and a small pyruvoyl-containing alpha subunit.</text>
</comment>
<comment type="subcellular location">
    <subcellularLocation>
        <location evidence="1">Cell membrane</location>
        <topology evidence="1">Peripheral membrane protein</topology>
    </subcellularLocation>
</comment>
<comment type="PTM">
    <text evidence="1">Is synthesized initially as an inactive proenzyme. Formation of the active enzyme involves a self-maturation process in which the active site pyruvoyl group is generated from an internal serine residue via an autocatalytic post-translational modification. Two non-identical subunits are generated from the proenzyme in this reaction, and the pyruvate is formed at the N-terminus of the alpha chain, which is derived from the carboxyl end of the proenzyme. The autoendoproteolytic cleavage occurs by a canonical serine protease mechanism, in which the side chain hydroxyl group of the serine supplies its oxygen atom to form the C-terminus of the beta chain, while the remainder of the serine residue undergoes an oxidative deamination to produce ammonia and the pyruvoyl prosthetic group on the alpha chain. During this reaction, the Ser that is part of the protease active site of the proenzyme becomes the pyruvoyl prosthetic group, which constitutes an essential element of the active site of the mature decarboxylase.</text>
</comment>
<comment type="similarity">
    <text evidence="1">Belongs to the phosphatidylserine decarboxylase family. PSD-B subfamily. Prokaryotic type I sub-subfamily.</text>
</comment>
<proteinExistence type="inferred from homology"/>
<organism>
    <name type="scientific">Pseudomonas entomophila (strain L48)</name>
    <dbReference type="NCBI Taxonomy" id="384676"/>
    <lineage>
        <taxon>Bacteria</taxon>
        <taxon>Pseudomonadati</taxon>
        <taxon>Pseudomonadota</taxon>
        <taxon>Gammaproteobacteria</taxon>
        <taxon>Pseudomonadales</taxon>
        <taxon>Pseudomonadaceae</taxon>
        <taxon>Pseudomonas</taxon>
    </lineage>
</organism>
<reference key="1">
    <citation type="journal article" date="2006" name="Nat. Biotechnol.">
        <title>Complete genome sequence of the entomopathogenic and metabolically versatile soil bacterium Pseudomonas entomophila.</title>
        <authorList>
            <person name="Vodovar N."/>
            <person name="Vallenet D."/>
            <person name="Cruveiller S."/>
            <person name="Rouy Z."/>
            <person name="Barbe V."/>
            <person name="Acosta C."/>
            <person name="Cattolico L."/>
            <person name="Jubin C."/>
            <person name="Lajus A."/>
            <person name="Segurens B."/>
            <person name="Vacherie B."/>
            <person name="Wincker P."/>
            <person name="Weissenbach J."/>
            <person name="Lemaitre B."/>
            <person name="Medigue C."/>
            <person name="Boccard F."/>
        </authorList>
    </citation>
    <scope>NUCLEOTIDE SEQUENCE [LARGE SCALE GENOMIC DNA]</scope>
    <source>
        <strain>L48</strain>
    </source>
</reference>
<accession>Q1I433</accession>
<name>PSD_PSEE4</name>
<feature type="chain" id="PRO_1000026568" description="Phosphatidylserine decarboxylase beta chain" evidence="1">
    <location>
        <begin position="1"/>
        <end position="251"/>
    </location>
</feature>
<feature type="chain" id="PRO_1000026569" description="Phosphatidylserine decarboxylase alpha chain" evidence="1">
    <location>
        <begin position="252"/>
        <end position="287"/>
    </location>
</feature>
<feature type="active site" description="Charge relay system; for autoendoproteolytic cleavage activity" evidence="1">
    <location>
        <position position="90"/>
    </location>
</feature>
<feature type="active site" description="Charge relay system; for autoendoproteolytic cleavage activity" evidence="1">
    <location>
        <position position="147"/>
    </location>
</feature>
<feature type="active site" description="Charge relay system; for autoendoproteolytic cleavage activity" evidence="1">
    <location>
        <position position="252"/>
    </location>
</feature>
<feature type="active site" description="Schiff-base intermediate with substrate; via pyruvic acid; for decarboxylase activity" evidence="1">
    <location>
        <position position="252"/>
    </location>
</feature>
<feature type="site" description="Cleavage (non-hydrolytic); by autocatalysis" evidence="1">
    <location>
        <begin position="251"/>
        <end position="252"/>
    </location>
</feature>
<feature type="modified residue" description="Pyruvic acid (Ser); by autocatalysis" evidence="1">
    <location>
        <position position="252"/>
    </location>
</feature>
<sequence length="287" mass="31491">MKSRLFIISQYLLPHHLLSRLAGCVAECRARWFKNAFTAWFAKRYQVNMSEALVEDLSAYEHFNAFFTRALKPGARPLDETPGAILCPADGAVSQLGPIEHGRIFQAKGHGYSALELLGGDPALAAPFMGGEFATIYLSPKDYHRVHMPLAGTLREMVYVPGRLFSVNQTTAENVPELFARNERVVCLFDTERGPMAVVLVGAMIVASIETVWAGLVTPPKRELKTFRYDEASRAPIHLEKGAELGRFKLGSTAIVLFGPEQVKWAESLGAGSAVRMGEMLAVPAQA</sequence>
<keyword id="KW-1003">Cell membrane</keyword>
<keyword id="KW-0210">Decarboxylase</keyword>
<keyword id="KW-0444">Lipid biosynthesis</keyword>
<keyword id="KW-0443">Lipid metabolism</keyword>
<keyword id="KW-0456">Lyase</keyword>
<keyword id="KW-0472">Membrane</keyword>
<keyword id="KW-0594">Phospholipid biosynthesis</keyword>
<keyword id="KW-1208">Phospholipid metabolism</keyword>
<keyword id="KW-0670">Pyruvate</keyword>
<keyword id="KW-0865">Zymogen</keyword>
<evidence type="ECO:0000255" key="1">
    <source>
        <dbReference type="HAMAP-Rule" id="MF_00662"/>
    </source>
</evidence>